<reference key="1">
    <citation type="journal article" date="2011" name="J. Bacteriol.">
        <title>Comparative genomics of 28 Salmonella enterica isolates: evidence for CRISPR-mediated adaptive sublineage evolution.</title>
        <authorList>
            <person name="Fricke W.F."/>
            <person name="Mammel M.K."/>
            <person name="McDermott P.F."/>
            <person name="Tartera C."/>
            <person name="White D.G."/>
            <person name="Leclerc J.E."/>
            <person name="Ravel J."/>
            <person name="Cebula T.A."/>
        </authorList>
    </citation>
    <scope>NUCLEOTIDE SEQUENCE [LARGE SCALE GENOMIC DNA]</scope>
    <source>
        <strain>CT_02021853</strain>
    </source>
</reference>
<dbReference type="EMBL" id="CP001144">
    <property type="protein sequence ID" value="ACH76815.1"/>
    <property type="molecule type" value="Genomic_DNA"/>
</dbReference>
<dbReference type="RefSeq" id="WP_000109266.1">
    <property type="nucleotide sequence ID" value="NC_011205.1"/>
</dbReference>
<dbReference type="SMR" id="B5FQ40"/>
<dbReference type="KEGG" id="sed:SeD_A1032"/>
<dbReference type="HOGENOM" id="CLU_035018_1_2_6"/>
<dbReference type="Proteomes" id="UP000008322">
    <property type="component" value="Chromosome"/>
</dbReference>
<dbReference type="GO" id="GO:0005886">
    <property type="term" value="C:plasma membrane"/>
    <property type="evidence" value="ECO:0007669"/>
    <property type="project" value="UniProtKB-SubCell"/>
</dbReference>
<dbReference type="GO" id="GO:0022857">
    <property type="term" value="F:transmembrane transporter activity"/>
    <property type="evidence" value="ECO:0007669"/>
    <property type="project" value="UniProtKB-UniRule"/>
</dbReference>
<dbReference type="CDD" id="cd17477">
    <property type="entry name" value="MFS_YcaD_like"/>
    <property type="match status" value="1"/>
</dbReference>
<dbReference type="FunFam" id="1.20.1250.20:FF:000041">
    <property type="entry name" value="Uncharacterized MFS-type transporter YcaD"/>
    <property type="match status" value="1"/>
</dbReference>
<dbReference type="FunFam" id="1.20.1250.20:FF:000066">
    <property type="entry name" value="Uncharacterized MFS-type transporter YcaD"/>
    <property type="match status" value="1"/>
</dbReference>
<dbReference type="Gene3D" id="1.20.1250.20">
    <property type="entry name" value="MFS general substrate transporter like domains"/>
    <property type="match status" value="2"/>
</dbReference>
<dbReference type="HAMAP" id="MF_01149">
    <property type="entry name" value="MFS_YcaD"/>
    <property type="match status" value="1"/>
</dbReference>
<dbReference type="InterPro" id="IPR011701">
    <property type="entry name" value="MFS"/>
</dbReference>
<dbReference type="InterPro" id="IPR020846">
    <property type="entry name" value="MFS_dom"/>
</dbReference>
<dbReference type="InterPro" id="IPR036259">
    <property type="entry name" value="MFS_trans_sf"/>
</dbReference>
<dbReference type="InterPro" id="IPR023745">
    <property type="entry name" value="MFS_YcaD"/>
</dbReference>
<dbReference type="InterPro" id="IPR047200">
    <property type="entry name" value="MFS_YcaD-like"/>
</dbReference>
<dbReference type="NCBIfam" id="NF002962">
    <property type="entry name" value="PRK03633.1"/>
    <property type="match status" value="1"/>
</dbReference>
<dbReference type="PANTHER" id="PTHR23521">
    <property type="entry name" value="TRANSPORTER MFS SUPERFAMILY"/>
    <property type="match status" value="1"/>
</dbReference>
<dbReference type="PANTHER" id="PTHR23521:SF2">
    <property type="entry name" value="TRANSPORTER MFS SUPERFAMILY"/>
    <property type="match status" value="1"/>
</dbReference>
<dbReference type="Pfam" id="PF07690">
    <property type="entry name" value="MFS_1"/>
    <property type="match status" value="1"/>
</dbReference>
<dbReference type="SUPFAM" id="SSF103473">
    <property type="entry name" value="MFS general substrate transporter"/>
    <property type="match status" value="1"/>
</dbReference>
<dbReference type="PROSITE" id="PS50850">
    <property type="entry name" value="MFS"/>
    <property type="match status" value="1"/>
</dbReference>
<proteinExistence type="inferred from homology"/>
<protein>
    <recommendedName>
        <fullName evidence="1">Uncharacterized MFS-type transporter YcaD</fullName>
    </recommendedName>
</protein>
<keyword id="KW-0997">Cell inner membrane</keyword>
<keyword id="KW-1003">Cell membrane</keyword>
<keyword id="KW-0472">Membrane</keyword>
<keyword id="KW-0812">Transmembrane</keyword>
<keyword id="KW-1133">Transmembrane helix</keyword>
<keyword id="KW-0813">Transport</keyword>
<evidence type="ECO:0000255" key="1">
    <source>
        <dbReference type="HAMAP-Rule" id="MF_01149"/>
    </source>
</evidence>
<organism>
    <name type="scientific">Salmonella dublin (strain CT_02021853)</name>
    <dbReference type="NCBI Taxonomy" id="439851"/>
    <lineage>
        <taxon>Bacteria</taxon>
        <taxon>Pseudomonadati</taxon>
        <taxon>Pseudomonadota</taxon>
        <taxon>Gammaproteobacteria</taxon>
        <taxon>Enterobacterales</taxon>
        <taxon>Enterobacteriaceae</taxon>
        <taxon>Salmonella</taxon>
    </lineage>
</organism>
<feature type="chain" id="PRO_1000137493" description="Uncharacterized MFS-type transporter YcaD">
    <location>
        <begin position="1"/>
        <end position="382"/>
    </location>
</feature>
<feature type="transmembrane region" description="Helical" evidence="1">
    <location>
        <begin position="8"/>
        <end position="28"/>
    </location>
</feature>
<feature type="transmembrane region" description="Helical" evidence="1">
    <location>
        <begin position="45"/>
        <end position="65"/>
    </location>
</feature>
<feature type="transmembrane region" description="Helical" evidence="1">
    <location>
        <begin position="75"/>
        <end position="95"/>
    </location>
</feature>
<feature type="transmembrane region" description="Helical" evidence="1">
    <location>
        <begin position="102"/>
        <end position="122"/>
    </location>
</feature>
<feature type="transmembrane region" description="Helical" evidence="1">
    <location>
        <begin position="131"/>
        <end position="151"/>
    </location>
</feature>
<feature type="transmembrane region" description="Helical" evidence="1">
    <location>
        <begin position="157"/>
        <end position="177"/>
    </location>
</feature>
<feature type="transmembrane region" description="Helical" evidence="1">
    <location>
        <begin position="204"/>
        <end position="224"/>
    </location>
</feature>
<feature type="transmembrane region" description="Helical" evidence="1">
    <location>
        <begin position="231"/>
        <end position="251"/>
    </location>
</feature>
<feature type="transmembrane region" description="Helical" evidence="1">
    <location>
        <begin position="270"/>
        <end position="290"/>
    </location>
</feature>
<feature type="transmembrane region" description="Helical" evidence="1">
    <location>
        <begin position="291"/>
        <end position="311"/>
    </location>
</feature>
<feature type="transmembrane region" description="Helical" evidence="1">
    <location>
        <begin position="325"/>
        <end position="345"/>
    </location>
</feature>
<feature type="transmembrane region" description="Helical" evidence="1">
    <location>
        <begin position="349"/>
        <end position="369"/>
    </location>
</feature>
<comment type="subcellular location">
    <subcellularLocation>
        <location evidence="1">Cell inner membrane</location>
        <topology evidence="1">Multi-pass membrane protein</topology>
    </subcellularLocation>
</comment>
<comment type="similarity">
    <text evidence="1">Belongs to the major facilitator superfamily. YcaD (TC 2.A.1.26) family.</text>
</comment>
<gene>
    <name evidence="1" type="primary">ycaD</name>
    <name type="ordered locus">SeD_A1032</name>
</gene>
<accession>B5FQ40</accession>
<name>YCAD_SALDC</name>
<sequence>MSTYTRPVMLLLCGLLLLTLAIAVLNTLVPLWLAQANLPTWQVGMVSSSYFTGNLVGTLFTGYLIKRIGFNRSYYLASLIFAAGCVGLGGMVGFWSWMSWRFIAGIGCAMIWVVVESALMCSGTSHNRGRLLAAYMMAYYMGTFLGQLLVSKVSGELLHVLPWVTGMILAGILPLLFTRIVNQQTQARHSSSISAMLKLRQARLGVNGCIISGIVLGSLYGLMPLYLKHQGMANASIGFWMAVLVSAGILGQWPMGRLADKFGRLLVLRVQVFVVILGSIAMLTQAAMAPALFILGAAGFTLYPVAMAWACEKVEHHQLVAMNQALLLSYTVGSLLGPSFAAMLMQNYSDNLLFIMIASVSFIYLLMLLRNAGQTPNPVAHI</sequence>